<organism>
    <name type="scientific">Shewanella sp. (strain W3-18-1)</name>
    <dbReference type="NCBI Taxonomy" id="351745"/>
    <lineage>
        <taxon>Bacteria</taxon>
        <taxon>Pseudomonadati</taxon>
        <taxon>Pseudomonadota</taxon>
        <taxon>Gammaproteobacteria</taxon>
        <taxon>Alteromonadales</taxon>
        <taxon>Shewanellaceae</taxon>
        <taxon>Shewanella</taxon>
    </lineage>
</organism>
<reference key="1">
    <citation type="submission" date="2006-12" db="EMBL/GenBank/DDBJ databases">
        <title>Complete sequence of Shewanella sp. W3-18-1.</title>
        <authorList>
            <consortium name="US DOE Joint Genome Institute"/>
            <person name="Copeland A."/>
            <person name="Lucas S."/>
            <person name="Lapidus A."/>
            <person name="Barry K."/>
            <person name="Detter J.C."/>
            <person name="Glavina del Rio T."/>
            <person name="Hammon N."/>
            <person name="Israni S."/>
            <person name="Dalin E."/>
            <person name="Tice H."/>
            <person name="Pitluck S."/>
            <person name="Chain P."/>
            <person name="Malfatti S."/>
            <person name="Shin M."/>
            <person name="Vergez L."/>
            <person name="Schmutz J."/>
            <person name="Larimer F."/>
            <person name="Land M."/>
            <person name="Hauser L."/>
            <person name="Kyrpides N."/>
            <person name="Lykidis A."/>
            <person name="Tiedje J."/>
            <person name="Richardson P."/>
        </authorList>
    </citation>
    <scope>NUCLEOTIDE SEQUENCE [LARGE SCALE GENOMIC DNA]</scope>
    <source>
        <strain>W3-18-1</strain>
    </source>
</reference>
<proteinExistence type="inferred from homology"/>
<dbReference type="EC" id="6.3.2.6" evidence="1"/>
<dbReference type="EMBL" id="CP000503">
    <property type="protein sequence ID" value="ABM26373.1"/>
    <property type="molecule type" value="Genomic_DNA"/>
</dbReference>
<dbReference type="RefSeq" id="WP_011790804.1">
    <property type="nucleotide sequence ID" value="NC_008750.1"/>
</dbReference>
<dbReference type="SMR" id="A1RNX8"/>
<dbReference type="KEGG" id="shw:Sputw3181_3563"/>
<dbReference type="HOGENOM" id="CLU_064197_0_0_6"/>
<dbReference type="UniPathway" id="UPA00074">
    <property type="reaction ID" value="UER00131"/>
</dbReference>
<dbReference type="Proteomes" id="UP000002597">
    <property type="component" value="Chromosome"/>
</dbReference>
<dbReference type="GO" id="GO:0005737">
    <property type="term" value="C:cytoplasm"/>
    <property type="evidence" value="ECO:0007669"/>
    <property type="project" value="TreeGrafter"/>
</dbReference>
<dbReference type="GO" id="GO:0005524">
    <property type="term" value="F:ATP binding"/>
    <property type="evidence" value="ECO:0007669"/>
    <property type="project" value="UniProtKB-KW"/>
</dbReference>
<dbReference type="GO" id="GO:0004639">
    <property type="term" value="F:phosphoribosylaminoimidazolesuccinocarboxamide synthase activity"/>
    <property type="evidence" value="ECO:0007669"/>
    <property type="project" value="UniProtKB-UniRule"/>
</dbReference>
<dbReference type="GO" id="GO:0006189">
    <property type="term" value="P:'de novo' IMP biosynthetic process"/>
    <property type="evidence" value="ECO:0007669"/>
    <property type="project" value="UniProtKB-UniRule"/>
</dbReference>
<dbReference type="CDD" id="cd01414">
    <property type="entry name" value="SAICAR_synt_Sc"/>
    <property type="match status" value="1"/>
</dbReference>
<dbReference type="FunFam" id="3.30.200.20:FF:000597">
    <property type="entry name" value="Phosphoribosylaminoimidazole-succinocarboxamide synthase"/>
    <property type="match status" value="1"/>
</dbReference>
<dbReference type="FunFam" id="3.30.470.20:FF:000067">
    <property type="entry name" value="Phosphoribosylaminoimidazole-succinocarboxamide synthase"/>
    <property type="match status" value="1"/>
</dbReference>
<dbReference type="Gene3D" id="3.30.470.20">
    <property type="entry name" value="ATP-grasp fold, B domain"/>
    <property type="match status" value="1"/>
</dbReference>
<dbReference type="Gene3D" id="3.30.200.20">
    <property type="entry name" value="Phosphorylase Kinase, domain 1"/>
    <property type="match status" value="1"/>
</dbReference>
<dbReference type="HAMAP" id="MF_00137">
    <property type="entry name" value="SAICAR_synth"/>
    <property type="match status" value="1"/>
</dbReference>
<dbReference type="InterPro" id="IPR028923">
    <property type="entry name" value="SAICAR_synt/ADE2_N"/>
</dbReference>
<dbReference type="InterPro" id="IPR014106">
    <property type="entry name" value="SAICAR_synthase_Vibrio-typ"/>
</dbReference>
<dbReference type="InterPro" id="IPR018236">
    <property type="entry name" value="SAICAR_synthetase_CS"/>
</dbReference>
<dbReference type="NCBIfam" id="NF010567">
    <property type="entry name" value="PRK13960.1"/>
    <property type="match status" value="1"/>
</dbReference>
<dbReference type="NCBIfam" id="TIGR02735">
    <property type="entry name" value="purC_vibrio"/>
    <property type="match status" value="1"/>
</dbReference>
<dbReference type="PANTHER" id="PTHR43700">
    <property type="entry name" value="PHOSPHORIBOSYLAMINOIMIDAZOLE-SUCCINOCARBOXAMIDE SYNTHASE"/>
    <property type="match status" value="1"/>
</dbReference>
<dbReference type="PANTHER" id="PTHR43700:SF1">
    <property type="entry name" value="PHOSPHORIBOSYLAMINOIMIDAZOLE-SUCCINOCARBOXAMIDE SYNTHASE"/>
    <property type="match status" value="1"/>
</dbReference>
<dbReference type="Pfam" id="PF01259">
    <property type="entry name" value="SAICAR_synt"/>
    <property type="match status" value="1"/>
</dbReference>
<dbReference type="SUPFAM" id="SSF56104">
    <property type="entry name" value="SAICAR synthase-like"/>
    <property type="match status" value="1"/>
</dbReference>
<dbReference type="PROSITE" id="PS01057">
    <property type="entry name" value="SAICAR_SYNTHETASE_1"/>
    <property type="match status" value="1"/>
</dbReference>
<feature type="chain" id="PRO_1000117856" description="Phosphoribosylaminoimidazole-succinocarboxamide synthase">
    <location>
        <begin position="1"/>
        <end position="367"/>
    </location>
</feature>
<name>PUR7_SHESW</name>
<comment type="catalytic activity">
    <reaction evidence="1">
        <text>5-amino-1-(5-phospho-D-ribosyl)imidazole-4-carboxylate + L-aspartate + ATP = (2S)-2-[5-amino-1-(5-phospho-beta-D-ribosyl)imidazole-4-carboxamido]succinate + ADP + phosphate + 2 H(+)</text>
        <dbReference type="Rhea" id="RHEA:22628"/>
        <dbReference type="ChEBI" id="CHEBI:15378"/>
        <dbReference type="ChEBI" id="CHEBI:29991"/>
        <dbReference type="ChEBI" id="CHEBI:30616"/>
        <dbReference type="ChEBI" id="CHEBI:43474"/>
        <dbReference type="ChEBI" id="CHEBI:58443"/>
        <dbReference type="ChEBI" id="CHEBI:77657"/>
        <dbReference type="ChEBI" id="CHEBI:456216"/>
        <dbReference type="EC" id="6.3.2.6"/>
    </reaction>
</comment>
<comment type="pathway">
    <text evidence="1">Purine metabolism; IMP biosynthesis via de novo pathway; 5-amino-1-(5-phospho-D-ribosyl)imidazole-4-carboxamide from 5-amino-1-(5-phospho-D-ribosyl)imidazole-4-carboxylate: step 1/2.</text>
</comment>
<comment type="similarity">
    <text evidence="1">Belongs to the SAICAR synthetase family.</text>
</comment>
<sequence length="367" mass="40915">MSLADSVLAVNNDLPIRTDSPVHSGKVRSVYWLTDADSRRLIKTKGYNVPEDTPLAIMVISDRISAFDCIFHGEGGLKGIPGKGAALNAISNHWFKLFAENGLADSHILDIPHPFVWIVQKARPIKVEAICRQYITGSMWRAYSKGERVFCGITLPEGLEKDQKLPDLLITPSTKGILTGIPGVPAQDDINISRSDIEANYQAFGFEKLEDIDLYEKLLKDGFKVISKALADIDQVFVDTKFEFGYVTDKDGNSKLIYMDEVGTPDSSRIWDGAAYRDGKILENSKEGFRQFLLNHFPDPDVLLNKDRMPEREALARDNDLPLEAMMQVSRTYTGVAEKVTGAAIPLPANPKADIIKILREEYDLIL</sequence>
<accession>A1RNX8</accession>
<evidence type="ECO:0000255" key="1">
    <source>
        <dbReference type="HAMAP-Rule" id="MF_00137"/>
    </source>
</evidence>
<keyword id="KW-0067">ATP-binding</keyword>
<keyword id="KW-0436">Ligase</keyword>
<keyword id="KW-0547">Nucleotide-binding</keyword>
<keyword id="KW-0658">Purine biosynthesis</keyword>
<gene>
    <name evidence="1" type="primary">purC</name>
    <name type="ordered locus">Sputw3181_3563</name>
</gene>
<protein>
    <recommendedName>
        <fullName evidence="1">Phosphoribosylaminoimidazole-succinocarboxamide synthase</fullName>
        <ecNumber evidence="1">6.3.2.6</ecNumber>
    </recommendedName>
    <alternativeName>
        <fullName evidence="1">SAICAR synthetase</fullName>
    </alternativeName>
</protein>